<organism>
    <name type="scientific">Salmonella paratyphi A (strain AKU_12601)</name>
    <dbReference type="NCBI Taxonomy" id="554290"/>
    <lineage>
        <taxon>Bacteria</taxon>
        <taxon>Pseudomonadati</taxon>
        <taxon>Pseudomonadota</taxon>
        <taxon>Gammaproteobacteria</taxon>
        <taxon>Enterobacterales</taxon>
        <taxon>Enterobacteriaceae</taxon>
        <taxon>Salmonella</taxon>
    </lineage>
</organism>
<reference key="1">
    <citation type="journal article" date="2009" name="BMC Genomics">
        <title>Pseudogene accumulation in the evolutionary histories of Salmonella enterica serovars Paratyphi A and Typhi.</title>
        <authorList>
            <person name="Holt K.E."/>
            <person name="Thomson N.R."/>
            <person name="Wain J."/>
            <person name="Langridge G.C."/>
            <person name="Hasan R."/>
            <person name="Bhutta Z.A."/>
            <person name="Quail M.A."/>
            <person name="Norbertczak H."/>
            <person name="Walker D."/>
            <person name="Simmonds M."/>
            <person name="White B."/>
            <person name="Bason N."/>
            <person name="Mungall K."/>
            <person name="Dougan G."/>
            <person name="Parkhill J."/>
        </authorList>
    </citation>
    <scope>NUCLEOTIDE SEQUENCE [LARGE SCALE GENOMIC DNA]</scope>
    <source>
        <strain>AKU_12601</strain>
    </source>
</reference>
<gene>
    <name evidence="1" type="primary">rpsO</name>
    <name type="ordered locus">SSPA2941</name>
</gene>
<name>RS15_SALPK</name>
<protein>
    <recommendedName>
        <fullName evidence="1">Small ribosomal subunit protein uS15</fullName>
    </recommendedName>
    <alternativeName>
        <fullName evidence="2">30S ribosomal protein S15</fullName>
    </alternativeName>
</protein>
<sequence>MSLSTEATAKIVSEFGRDANDTGSTDVQVALLTAQINHLQGHFAEHKKDHHSRRGLLRMVSQRRKLLDYLKRKDVARYTALIERLGLRR</sequence>
<evidence type="ECO:0000255" key="1">
    <source>
        <dbReference type="HAMAP-Rule" id="MF_01343"/>
    </source>
</evidence>
<evidence type="ECO:0000305" key="2"/>
<keyword id="KW-0687">Ribonucleoprotein</keyword>
<keyword id="KW-0689">Ribosomal protein</keyword>
<keyword id="KW-0694">RNA-binding</keyword>
<keyword id="KW-0699">rRNA-binding</keyword>
<accession>B5BGJ2</accession>
<comment type="function">
    <text evidence="1">One of the primary rRNA binding proteins, it binds directly to 16S rRNA where it helps nucleate assembly of the platform of the 30S subunit by binding and bridging several RNA helices of the 16S rRNA.</text>
</comment>
<comment type="function">
    <text evidence="1">Forms an intersubunit bridge (bridge B4) with the 23S rRNA of the 50S subunit in the ribosome.</text>
</comment>
<comment type="subunit">
    <text evidence="1">Part of the 30S ribosomal subunit. Forms a bridge to the 50S subunit in the 70S ribosome, contacting the 23S rRNA.</text>
</comment>
<comment type="similarity">
    <text evidence="1">Belongs to the universal ribosomal protein uS15 family.</text>
</comment>
<proteinExistence type="inferred from homology"/>
<dbReference type="EMBL" id="FM200053">
    <property type="protein sequence ID" value="CAR61190.1"/>
    <property type="molecule type" value="Genomic_DNA"/>
</dbReference>
<dbReference type="RefSeq" id="WP_000059465.1">
    <property type="nucleotide sequence ID" value="NC_011147.1"/>
</dbReference>
<dbReference type="SMR" id="B5BGJ2"/>
<dbReference type="GeneID" id="93035884"/>
<dbReference type="KEGG" id="sek:SSPA2941"/>
<dbReference type="HOGENOM" id="CLU_148518_0_0_6"/>
<dbReference type="Proteomes" id="UP000001869">
    <property type="component" value="Chromosome"/>
</dbReference>
<dbReference type="GO" id="GO:0022627">
    <property type="term" value="C:cytosolic small ribosomal subunit"/>
    <property type="evidence" value="ECO:0007669"/>
    <property type="project" value="TreeGrafter"/>
</dbReference>
<dbReference type="GO" id="GO:0019843">
    <property type="term" value="F:rRNA binding"/>
    <property type="evidence" value="ECO:0007669"/>
    <property type="project" value="UniProtKB-UniRule"/>
</dbReference>
<dbReference type="GO" id="GO:0003735">
    <property type="term" value="F:structural constituent of ribosome"/>
    <property type="evidence" value="ECO:0007669"/>
    <property type="project" value="InterPro"/>
</dbReference>
<dbReference type="GO" id="GO:0006412">
    <property type="term" value="P:translation"/>
    <property type="evidence" value="ECO:0007669"/>
    <property type="project" value="UniProtKB-UniRule"/>
</dbReference>
<dbReference type="CDD" id="cd00353">
    <property type="entry name" value="Ribosomal_S15p_S13e"/>
    <property type="match status" value="1"/>
</dbReference>
<dbReference type="FunFam" id="1.10.287.10:FF:000002">
    <property type="entry name" value="30S ribosomal protein S15"/>
    <property type="match status" value="1"/>
</dbReference>
<dbReference type="Gene3D" id="6.10.250.3130">
    <property type="match status" value="1"/>
</dbReference>
<dbReference type="Gene3D" id="1.10.287.10">
    <property type="entry name" value="S15/NS1, RNA-binding"/>
    <property type="match status" value="1"/>
</dbReference>
<dbReference type="HAMAP" id="MF_01343_B">
    <property type="entry name" value="Ribosomal_uS15_B"/>
    <property type="match status" value="1"/>
</dbReference>
<dbReference type="InterPro" id="IPR000589">
    <property type="entry name" value="Ribosomal_uS15"/>
</dbReference>
<dbReference type="InterPro" id="IPR005290">
    <property type="entry name" value="Ribosomal_uS15_bac-type"/>
</dbReference>
<dbReference type="InterPro" id="IPR009068">
    <property type="entry name" value="uS15_NS1_RNA-bd_sf"/>
</dbReference>
<dbReference type="NCBIfam" id="TIGR00952">
    <property type="entry name" value="S15_bact"/>
    <property type="match status" value="1"/>
</dbReference>
<dbReference type="PANTHER" id="PTHR23321">
    <property type="entry name" value="RIBOSOMAL PROTEIN S15, BACTERIAL AND ORGANELLAR"/>
    <property type="match status" value="1"/>
</dbReference>
<dbReference type="PANTHER" id="PTHR23321:SF26">
    <property type="entry name" value="SMALL RIBOSOMAL SUBUNIT PROTEIN US15M"/>
    <property type="match status" value="1"/>
</dbReference>
<dbReference type="Pfam" id="PF00312">
    <property type="entry name" value="Ribosomal_S15"/>
    <property type="match status" value="1"/>
</dbReference>
<dbReference type="SMART" id="SM01387">
    <property type="entry name" value="Ribosomal_S15"/>
    <property type="match status" value="1"/>
</dbReference>
<dbReference type="SUPFAM" id="SSF47060">
    <property type="entry name" value="S15/NS1 RNA-binding domain"/>
    <property type="match status" value="1"/>
</dbReference>
<dbReference type="PROSITE" id="PS00362">
    <property type="entry name" value="RIBOSOMAL_S15"/>
    <property type="match status" value="1"/>
</dbReference>
<feature type="chain" id="PRO_1000143168" description="Small ribosomal subunit protein uS15">
    <location>
        <begin position="1"/>
        <end position="89"/>
    </location>
</feature>